<dbReference type="EMBL" id="Z72645">
    <property type="status" value="NOT_ANNOTATED_CDS"/>
    <property type="molecule type" value="Genomic_DNA"/>
</dbReference>
<dbReference type="EMBL" id="AF479948">
    <property type="protein sequence ID" value="AAL79261.1"/>
    <property type="molecule type" value="Genomic_DNA"/>
</dbReference>
<dbReference type="PaxDb" id="4932-YGL123C-A"/>
<dbReference type="EnsemblFungi" id="YGL123C-A_mRNA">
    <property type="protein sequence ID" value="YGL123C-A"/>
    <property type="gene ID" value="YGL123C-A"/>
</dbReference>
<dbReference type="AGR" id="SGD:S000028634"/>
<dbReference type="SGD" id="S000028634">
    <property type="gene designation" value="YGL123C-A"/>
</dbReference>
<dbReference type="HOGENOM" id="CLU_2656356_0_0_1"/>
<protein>
    <recommendedName>
        <fullName>Putative uncharacterized protein YGL123C-A</fullName>
    </recommendedName>
</protein>
<evidence type="ECO:0000305" key="1"/>
<evidence type="ECO:0000305" key="2">
    <source>
    </source>
</evidence>
<organism>
    <name type="scientific">Saccharomyces cerevisiae (strain ATCC 204508 / S288c)</name>
    <name type="common">Baker's yeast</name>
    <dbReference type="NCBI Taxonomy" id="559292"/>
    <lineage>
        <taxon>Eukaryota</taxon>
        <taxon>Fungi</taxon>
        <taxon>Dikarya</taxon>
        <taxon>Ascomycota</taxon>
        <taxon>Saccharomycotina</taxon>
        <taxon>Saccharomycetes</taxon>
        <taxon>Saccharomycetales</taxon>
        <taxon>Saccharomycetaceae</taxon>
        <taxon>Saccharomyces</taxon>
    </lineage>
</organism>
<sequence length="76" mass="8264">MFMTSSCKPGNKVSMIWNSLTGKECKKISSMVVILPALTNLPSLVTGTHPFSSVFLGPLLFGRPLLRPPKPPLFCC</sequence>
<name>YG123_YEAST</name>
<proteinExistence type="uncertain"/>
<reference key="1">
    <citation type="journal article" date="1997" name="Nature">
        <title>The nucleotide sequence of Saccharomyces cerevisiae chromosome VII.</title>
        <authorList>
            <person name="Tettelin H."/>
            <person name="Agostoni-Carbone M.L."/>
            <person name="Albermann K."/>
            <person name="Albers M."/>
            <person name="Arroyo J."/>
            <person name="Backes U."/>
            <person name="Barreiros T."/>
            <person name="Bertani I."/>
            <person name="Bjourson A.J."/>
            <person name="Brueckner M."/>
            <person name="Bruschi C.V."/>
            <person name="Carignani G."/>
            <person name="Castagnoli L."/>
            <person name="Cerdan E."/>
            <person name="Clemente M.L."/>
            <person name="Coblenz A."/>
            <person name="Coglievina M."/>
            <person name="Coissac E."/>
            <person name="Defoor E."/>
            <person name="Del Bino S."/>
            <person name="Delius H."/>
            <person name="Delneri D."/>
            <person name="de Wergifosse P."/>
            <person name="Dujon B."/>
            <person name="Durand P."/>
            <person name="Entian K.-D."/>
            <person name="Eraso P."/>
            <person name="Escribano V."/>
            <person name="Fabiani L."/>
            <person name="Fartmann B."/>
            <person name="Feroli F."/>
            <person name="Feuermann M."/>
            <person name="Frontali L."/>
            <person name="Garcia-Gonzalez M."/>
            <person name="Garcia-Saez M.I."/>
            <person name="Goffeau A."/>
            <person name="Guerreiro P."/>
            <person name="Hani J."/>
            <person name="Hansen M."/>
            <person name="Hebling U."/>
            <person name="Hernandez K."/>
            <person name="Heumann K."/>
            <person name="Hilger F."/>
            <person name="Hofmann B."/>
            <person name="Indge K.J."/>
            <person name="James C.M."/>
            <person name="Klima R."/>
            <person name="Koetter P."/>
            <person name="Kramer B."/>
            <person name="Kramer W."/>
            <person name="Lauquin G."/>
            <person name="Leuther H."/>
            <person name="Louis E.J."/>
            <person name="Maillier E."/>
            <person name="Marconi A."/>
            <person name="Martegani E."/>
            <person name="Mazon M.J."/>
            <person name="Mazzoni C."/>
            <person name="McReynolds A.D.K."/>
            <person name="Melchioretto P."/>
            <person name="Mewes H.-W."/>
            <person name="Minenkova O."/>
            <person name="Mueller-Auer S."/>
            <person name="Nawrocki A."/>
            <person name="Netter P."/>
            <person name="Neu R."/>
            <person name="Nombela C."/>
            <person name="Oliver S.G."/>
            <person name="Panzeri L."/>
            <person name="Paoluzi S."/>
            <person name="Plevani P."/>
            <person name="Portetelle D."/>
            <person name="Portillo F."/>
            <person name="Potier S."/>
            <person name="Purnelle B."/>
            <person name="Rieger M."/>
            <person name="Riles L."/>
            <person name="Rinaldi T."/>
            <person name="Robben J."/>
            <person name="Rodrigues-Pousada C."/>
            <person name="Rodriguez-Belmonte E."/>
            <person name="Rodriguez-Torres A.M."/>
            <person name="Rose M."/>
            <person name="Ruzzi M."/>
            <person name="Saliola M."/>
            <person name="Sanchez-Perez M."/>
            <person name="Schaefer B."/>
            <person name="Schaefer M."/>
            <person name="Scharfe M."/>
            <person name="Schmidheini T."/>
            <person name="Schreer A."/>
            <person name="Skala J."/>
            <person name="Souciet J.-L."/>
            <person name="Steensma H.Y."/>
            <person name="Talla E."/>
            <person name="Thierry A."/>
            <person name="Vandenbol M."/>
            <person name="van der Aart Q.J.M."/>
            <person name="Van Dyck L."/>
            <person name="Vanoni M."/>
            <person name="Verhasselt P."/>
            <person name="Voet M."/>
            <person name="Volckaert G."/>
            <person name="Wambutt R."/>
            <person name="Watson M.D."/>
            <person name="Weber N."/>
            <person name="Wedler E."/>
            <person name="Wedler H."/>
            <person name="Wipfli P."/>
            <person name="Wolf K."/>
            <person name="Wright L.F."/>
            <person name="Zaccaria P."/>
            <person name="Zimmermann M."/>
            <person name="Zollner A."/>
            <person name="Kleine K."/>
        </authorList>
    </citation>
    <scope>NUCLEOTIDE SEQUENCE [LARGE SCALE GENOMIC DNA]</scope>
    <source>
        <strain>ATCC 204508 / S288c</strain>
    </source>
</reference>
<reference key="2">
    <citation type="journal article" date="2014" name="G3 (Bethesda)">
        <title>The reference genome sequence of Saccharomyces cerevisiae: Then and now.</title>
        <authorList>
            <person name="Engel S.R."/>
            <person name="Dietrich F.S."/>
            <person name="Fisk D.G."/>
            <person name="Binkley G."/>
            <person name="Balakrishnan R."/>
            <person name="Costanzo M.C."/>
            <person name="Dwight S.S."/>
            <person name="Hitz B.C."/>
            <person name="Karra K."/>
            <person name="Nash R.S."/>
            <person name="Weng S."/>
            <person name="Wong E.D."/>
            <person name="Lloyd P."/>
            <person name="Skrzypek M.S."/>
            <person name="Miyasato S.R."/>
            <person name="Simison M."/>
            <person name="Cherry J.M."/>
        </authorList>
    </citation>
    <scope>GENOME REANNOTATION</scope>
    <source>
        <strain>ATCC 204508 / S288c</strain>
    </source>
</reference>
<reference key="3">
    <citation type="journal article" date="2002" name="Nat. Biotechnol.">
        <title>An integrated approach for finding overlooked genes in yeast.</title>
        <authorList>
            <person name="Kumar A."/>
            <person name="Harrison P.M."/>
            <person name="Cheung K.-H."/>
            <person name="Lan N."/>
            <person name="Echols N."/>
            <person name="Bertone P."/>
            <person name="Miller P."/>
            <person name="Gerstein M.B."/>
            <person name="Snyder M."/>
        </authorList>
    </citation>
    <scope>NUCLEOTIDE SEQUENCE [GENOMIC DNA]</scope>
</reference>
<gene>
    <name type="ordered locus">YGL123C-A</name>
</gene>
<accession>Q8TGP1</accession>
<comment type="miscellaneous">
    <text evidence="1">Completely overlaps RPS2.</text>
</comment>
<comment type="caution">
    <text evidence="2">Product of a dubious gene prediction unlikely to encode a functional protein. Because of that it is not part of the S.cerevisiae S288c complete/reference proteome set.</text>
</comment>
<feature type="chain" id="PRO_0000299920" description="Putative uncharacterized protein YGL123C-A">
    <location>
        <begin position="1"/>
        <end position="76"/>
    </location>
</feature>